<comment type="function">
    <text evidence="1">Together with its co-chaperonin GroES, plays an essential role in assisting protein folding. The GroEL-GroES system forms a nano-cage that allows encapsulation of the non-native substrate proteins and provides a physical environment optimized to promote and accelerate protein folding.</text>
</comment>
<comment type="catalytic activity">
    <reaction evidence="1">
        <text>ATP + H2O + a folded polypeptide = ADP + phosphate + an unfolded polypeptide.</text>
        <dbReference type="EC" id="5.6.1.7"/>
    </reaction>
</comment>
<comment type="subunit">
    <text evidence="1">Forms a cylinder of 14 subunits composed of two heptameric rings stacked back-to-back. Interacts with the co-chaperonin GroES.</text>
</comment>
<comment type="subcellular location">
    <subcellularLocation>
        <location evidence="1">Cytoplasm</location>
    </subcellularLocation>
</comment>
<comment type="similarity">
    <text evidence="1">Belongs to the chaperonin (HSP60) family.</text>
</comment>
<protein>
    <recommendedName>
        <fullName evidence="1">Chaperonin GroEL 1</fullName>
        <ecNumber evidence="1">5.6.1.7</ecNumber>
    </recommendedName>
    <alternativeName>
        <fullName evidence="1">60 kDa chaperonin 1</fullName>
    </alternativeName>
    <alternativeName>
        <fullName evidence="1">Chaperonin-60 1</fullName>
        <shortName evidence="1">Cpn60 1</shortName>
    </alternativeName>
</protein>
<feature type="chain" id="PRO_0000332025" description="Chaperonin GroEL 1">
    <location>
        <begin position="1"/>
        <end position="540"/>
    </location>
</feature>
<feature type="binding site" evidence="1">
    <location>
        <begin position="29"/>
        <end position="32"/>
    </location>
    <ligand>
        <name>ATP</name>
        <dbReference type="ChEBI" id="CHEBI:30616"/>
    </ligand>
</feature>
<feature type="binding site" evidence="1">
    <location>
        <begin position="86"/>
        <end position="90"/>
    </location>
    <ligand>
        <name>ATP</name>
        <dbReference type="ChEBI" id="CHEBI:30616"/>
    </ligand>
</feature>
<feature type="binding site" evidence="1">
    <location>
        <position position="413"/>
    </location>
    <ligand>
        <name>ATP</name>
        <dbReference type="ChEBI" id="CHEBI:30616"/>
    </ligand>
</feature>
<feature type="binding site" evidence="1">
    <location>
        <begin position="478"/>
        <end position="480"/>
    </location>
    <ligand>
        <name>ATP</name>
        <dbReference type="ChEBI" id="CHEBI:30616"/>
    </ligand>
</feature>
<feature type="binding site" evidence="1">
    <location>
        <position position="494"/>
    </location>
    <ligand>
        <name>ATP</name>
        <dbReference type="ChEBI" id="CHEBI:30616"/>
    </ligand>
</feature>
<reference key="1">
    <citation type="submission" date="2006-06" db="EMBL/GenBank/DDBJ databases">
        <title>Complete sequence of chromosome of Mycobacterium sp. MCS.</title>
        <authorList>
            <consortium name="US DOE Joint Genome Institute"/>
            <person name="Copeland A."/>
            <person name="Lucas S."/>
            <person name="Lapidus A."/>
            <person name="Barry K."/>
            <person name="Detter J.C."/>
            <person name="Glavina del Rio T."/>
            <person name="Hammon N."/>
            <person name="Israni S."/>
            <person name="Dalin E."/>
            <person name="Tice H."/>
            <person name="Pitluck S."/>
            <person name="Martinez M."/>
            <person name="Schmutz J."/>
            <person name="Larimer F."/>
            <person name="Land M."/>
            <person name="Hauser L."/>
            <person name="Kyrpides N."/>
            <person name="Kim E."/>
            <person name="Miller C.D."/>
            <person name="Hughes J.E."/>
            <person name="Anderson A.J."/>
            <person name="Sims R.C."/>
            <person name="Richardson P."/>
        </authorList>
    </citation>
    <scope>NUCLEOTIDE SEQUENCE [LARGE SCALE GENOMIC DNA]</scope>
    <source>
        <strain>MCS</strain>
    </source>
</reference>
<accession>Q1BCW7</accession>
<name>CH601_MYCSS</name>
<sequence>MSKQIEFNETARRAMEIGVDKLADAVKVTLGPRGRNVVLAKSWGGPTVTNDGVTIAREIDLEDPFENLGAQLVKSVATKTNDVAGDGTTTATVLAQALVRAGLRNVAAGANPIALGAGISKAADAVSEALLAAATPVDDKSGIAQVATVSSRDEQIGELVGEAMTKVGHDGVVTVEESSTLNTELEVTEGVGFDKGFISAYFVTDFDSQEAVLEDALVLLHREKVSSLPDLLPLLEKVAEAGKPLLIIAEDVEGEALSTLVVNAIRKTLKAVAVKAPFFGDRRKAFLDDLAVVTGGQVINPDVGLVLREVGLDVLGTARRVVVTKDSTVIVDGGGSADAIADRAKQLRAEIEATDSDWDREKLEERLAKLAGGVAVIKVGAATETDLKKRKEAVEDAVSAAKAAVEEGIVTGGGAALVQARKALDSLRGSVSGDEALGVEVFNSALSAPLYWIATNAGLDGSVVVNKVSELPAGQGFNAATLEFGDLLADGVVDPVKVTRSAVLNAASVARMVLTTETAIVDKPAEEEDHGHGHHHGHAH</sequence>
<keyword id="KW-0067">ATP-binding</keyword>
<keyword id="KW-0143">Chaperone</keyword>
<keyword id="KW-0963">Cytoplasm</keyword>
<keyword id="KW-0413">Isomerase</keyword>
<keyword id="KW-0547">Nucleotide-binding</keyword>
<dbReference type="EC" id="5.6.1.7" evidence="1"/>
<dbReference type="EMBL" id="CP000384">
    <property type="protein sequence ID" value="ABG07267.1"/>
    <property type="molecule type" value="Genomic_DNA"/>
</dbReference>
<dbReference type="SMR" id="Q1BCW7"/>
<dbReference type="KEGG" id="mmc:Mmcs_1154"/>
<dbReference type="HOGENOM" id="CLU_016503_3_0_11"/>
<dbReference type="BioCyc" id="MSP164756:G1G6O-1180-MONOMER"/>
<dbReference type="GO" id="GO:0005737">
    <property type="term" value="C:cytoplasm"/>
    <property type="evidence" value="ECO:0007669"/>
    <property type="project" value="UniProtKB-SubCell"/>
</dbReference>
<dbReference type="GO" id="GO:0005524">
    <property type="term" value="F:ATP binding"/>
    <property type="evidence" value="ECO:0007669"/>
    <property type="project" value="UniProtKB-UniRule"/>
</dbReference>
<dbReference type="GO" id="GO:0140662">
    <property type="term" value="F:ATP-dependent protein folding chaperone"/>
    <property type="evidence" value="ECO:0007669"/>
    <property type="project" value="InterPro"/>
</dbReference>
<dbReference type="GO" id="GO:0016853">
    <property type="term" value="F:isomerase activity"/>
    <property type="evidence" value="ECO:0007669"/>
    <property type="project" value="UniProtKB-KW"/>
</dbReference>
<dbReference type="GO" id="GO:0051082">
    <property type="term" value="F:unfolded protein binding"/>
    <property type="evidence" value="ECO:0007669"/>
    <property type="project" value="UniProtKB-UniRule"/>
</dbReference>
<dbReference type="GO" id="GO:0042026">
    <property type="term" value="P:protein refolding"/>
    <property type="evidence" value="ECO:0007669"/>
    <property type="project" value="UniProtKB-UniRule"/>
</dbReference>
<dbReference type="CDD" id="cd03344">
    <property type="entry name" value="GroEL"/>
    <property type="match status" value="1"/>
</dbReference>
<dbReference type="FunFam" id="3.50.7.10:FF:000001">
    <property type="entry name" value="60 kDa chaperonin"/>
    <property type="match status" value="1"/>
</dbReference>
<dbReference type="Gene3D" id="3.50.7.10">
    <property type="entry name" value="GroEL"/>
    <property type="match status" value="1"/>
</dbReference>
<dbReference type="Gene3D" id="1.10.560.10">
    <property type="entry name" value="GroEL-like equatorial domain"/>
    <property type="match status" value="1"/>
</dbReference>
<dbReference type="Gene3D" id="3.30.260.10">
    <property type="entry name" value="TCP-1-like chaperonin intermediate domain"/>
    <property type="match status" value="1"/>
</dbReference>
<dbReference type="HAMAP" id="MF_00600">
    <property type="entry name" value="CH60"/>
    <property type="match status" value="1"/>
</dbReference>
<dbReference type="InterPro" id="IPR018370">
    <property type="entry name" value="Chaperonin_Cpn60_CS"/>
</dbReference>
<dbReference type="InterPro" id="IPR001844">
    <property type="entry name" value="Cpn60/GroEL"/>
</dbReference>
<dbReference type="InterPro" id="IPR002423">
    <property type="entry name" value="Cpn60/GroEL/TCP-1"/>
</dbReference>
<dbReference type="InterPro" id="IPR027409">
    <property type="entry name" value="GroEL-like_apical_dom_sf"/>
</dbReference>
<dbReference type="InterPro" id="IPR027413">
    <property type="entry name" value="GROEL-like_equatorial_sf"/>
</dbReference>
<dbReference type="InterPro" id="IPR027410">
    <property type="entry name" value="TCP-1-like_intermed_sf"/>
</dbReference>
<dbReference type="NCBIfam" id="TIGR02348">
    <property type="entry name" value="GroEL"/>
    <property type="match status" value="1"/>
</dbReference>
<dbReference type="NCBIfam" id="NF000592">
    <property type="entry name" value="PRK00013.1"/>
    <property type="match status" value="1"/>
</dbReference>
<dbReference type="NCBIfam" id="NF009487">
    <property type="entry name" value="PRK12849.1"/>
    <property type="match status" value="1"/>
</dbReference>
<dbReference type="NCBIfam" id="NF009488">
    <property type="entry name" value="PRK12850.1"/>
    <property type="match status" value="1"/>
</dbReference>
<dbReference type="NCBIfam" id="NF009489">
    <property type="entry name" value="PRK12851.1"/>
    <property type="match status" value="1"/>
</dbReference>
<dbReference type="PANTHER" id="PTHR45633">
    <property type="entry name" value="60 KDA HEAT SHOCK PROTEIN, MITOCHONDRIAL"/>
    <property type="match status" value="1"/>
</dbReference>
<dbReference type="Pfam" id="PF00118">
    <property type="entry name" value="Cpn60_TCP1"/>
    <property type="match status" value="1"/>
</dbReference>
<dbReference type="PRINTS" id="PR00298">
    <property type="entry name" value="CHAPERONIN60"/>
</dbReference>
<dbReference type="SUPFAM" id="SSF52029">
    <property type="entry name" value="GroEL apical domain-like"/>
    <property type="match status" value="1"/>
</dbReference>
<dbReference type="SUPFAM" id="SSF48592">
    <property type="entry name" value="GroEL equatorial domain-like"/>
    <property type="match status" value="1"/>
</dbReference>
<dbReference type="SUPFAM" id="SSF54849">
    <property type="entry name" value="GroEL-intermediate domain like"/>
    <property type="match status" value="1"/>
</dbReference>
<dbReference type="PROSITE" id="PS00296">
    <property type="entry name" value="CHAPERONINS_CPN60"/>
    <property type="match status" value="1"/>
</dbReference>
<proteinExistence type="inferred from homology"/>
<organism>
    <name type="scientific">Mycobacterium sp. (strain MCS)</name>
    <dbReference type="NCBI Taxonomy" id="164756"/>
    <lineage>
        <taxon>Bacteria</taxon>
        <taxon>Bacillati</taxon>
        <taxon>Actinomycetota</taxon>
        <taxon>Actinomycetes</taxon>
        <taxon>Mycobacteriales</taxon>
        <taxon>Mycobacteriaceae</taxon>
        <taxon>Mycobacterium</taxon>
    </lineage>
</organism>
<evidence type="ECO:0000255" key="1">
    <source>
        <dbReference type="HAMAP-Rule" id="MF_00600"/>
    </source>
</evidence>
<gene>
    <name evidence="1" type="primary">groEL1</name>
    <name evidence="1" type="synonym">groL1</name>
    <name type="ordered locus">Mmcs_1154</name>
</gene>